<reference key="1">
    <citation type="journal article" date="2009" name="BMC Genomics">
        <title>Comprehensive EST analysis of the symbiotic sea anemone, Anemonia viridis.</title>
        <authorList>
            <person name="Sabourault C."/>
            <person name="Ganot P."/>
            <person name="Deleury E."/>
            <person name="Allemand D."/>
            <person name="Furla P."/>
        </authorList>
    </citation>
    <scope>NUCLEOTIDE SEQUENCE [MRNA]</scope>
</reference>
<reference key="2">
    <citation type="journal article" date="2011" name="BMC Genomics">
        <title>The mining of toxin-like polypeptides from EST database by single residue distribution analysis.</title>
        <authorList>
            <person name="Kozlov S."/>
            <person name="Grishin E."/>
        </authorList>
    </citation>
    <scope>NOMENCLATURE</scope>
</reference>
<reference key="3">
    <citation type="journal article" date="2012" name="Toxicon">
        <title>Development of a rational nomenclature for naming peptide and protein toxins from sea anemones.</title>
        <authorList>
            <person name="Oliveira J.S."/>
            <person name="Fuentes-Silva D."/>
            <person name="King G.F."/>
        </authorList>
    </citation>
    <scope>NOMENCLATURE</scope>
</reference>
<protein>
    <recommendedName>
        <fullName evidence="6">U-actitoxin-Avd3r</fullName>
        <shortName evidence="6">U-AITX-Avd3r</shortName>
    </recommendedName>
    <alternativeName>
        <fullName evidence="5">AsKC15</fullName>
    </alternativeName>
</protein>
<accession>P0DN19</accession>
<evidence type="ECO:0000250" key="1"/>
<evidence type="ECO:0000250" key="2">
    <source>
        <dbReference type="UniProtKB" id="P10280"/>
    </source>
</evidence>
<evidence type="ECO:0000250" key="3">
    <source>
        <dbReference type="UniProtKB" id="Q9TWF8"/>
    </source>
</evidence>
<evidence type="ECO:0000255" key="4">
    <source>
        <dbReference type="PROSITE-ProRule" id="PRU00031"/>
    </source>
</evidence>
<evidence type="ECO:0000303" key="5">
    <source>
    </source>
</evidence>
<evidence type="ECO:0000303" key="6">
    <source>
    </source>
</evidence>
<evidence type="ECO:0000305" key="7"/>
<proteinExistence type="evidence at transcript level"/>
<feature type="signal peptide" evidence="2">
    <location>
        <begin position="1" status="less than"/>
        <end position="6"/>
    </location>
</feature>
<feature type="chain" id="PRO_0000433775" description="U-actitoxin-Avd3r">
    <location>
        <begin position="7"/>
        <end position="65"/>
    </location>
</feature>
<feature type="propeptide" id="PRO_0000433776" evidence="2">
    <location>
        <begin position="66"/>
        <end position="72"/>
    </location>
</feature>
<feature type="domain" description="BPTI/Kunitz inhibitor" evidence="4">
    <location>
        <begin position="11"/>
        <end position="61"/>
    </location>
</feature>
<feature type="site" description="Reactive bond" evidence="1">
    <location>
        <begin position="21"/>
        <end position="22"/>
    </location>
</feature>
<feature type="disulfide bond" evidence="4">
    <location>
        <begin position="11"/>
        <end position="61"/>
    </location>
</feature>
<feature type="disulfide bond" evidence="4">
    <location>
        <begin position="20"/>
        <end position="44"/>
    </location>
</feature>
<feature type="disulfide bond" evidence="4">
    <location>
        <begin position="36"/>
        <end position="57"/>
    </location>
</feature>
<feature type="non-terminal residue" evidence="5">
    <location>
        <position position="1"/>
    </location>
</feature>
<organism>
    <name type="scientific">Anemonia viridis</name>
    <name type="common">Snakelocks anemone</name>
    <dbReference type="NCBI Taxonomy" id="51769"/>
    <lineage>
        <taxon>Eukaryota</taxon>
        <taxon>Metazoa</taxon>
        <taxon>Cnidaria</taxon>
        <taxon>Anthozoa</taxon>
        <taxon>Hexacorallia</taxon>
        <taxon>Actiniaria</taxon>
        <taxon>Actiniidae</taxon>
        <taxon>Anemonia</taxon>
    </lineage>
</organism>
<sequence length="72" mass="8277">ADVSYGINKDCLLPMDVGRCRAKFPRYYYNSSSRRCEKFNYGGCRGNANNFHTLEECEKVCGVRSRDSPKEN</sequence>
<comment type="function">
    <text evidence="2 3">Serine protease inhibitor that inhibits both tissue and plasma kallikreins. Has hemolytic activity. Inhibits voltage-gated potassium channels (Kv).</text>
</comment>
<comment type="subcellular location">
    <subcellularLocation>
        <location evidence="7">Secreted</location>
    </subcellularLocation>
    <subcellularLocation>
        <location evidence="7">Nematocyst</location>
    </subcellularLocation>
</comment>
<comment type="similarity">
    <text evidence="7">Belongs to the venom Kunitz-type family. Sea anemone type 2 potassium channel toxin subfamily.</text>
</comment>
<comment type="caution">
    <text evidence="7">Opinions are divided on whether Anemonia viridis (Forsskal, 1775) and Anemonia sulcata (Pennant, 1777) are separate species.</text>
</comment>
<dbReference type="EMBL" id="FK741437">
    <property type="status" value="NOT_ANNOTATED_CDS"/>
    <property type="molecule type" value="mRNA"/>
</dbReference>
<dbReference type="EMBL" id="FK741043">
    <property type="status" value="NOT_ANNOTATED_CDS"/>
    <property type="molecule type" value="mRNA"/>
</dbReference>
<dbReference type="SMR" id="P0DN19"/>
<dbReference type="GO" id="GO:0005615">
    <property type="term" value="C:extracellular space"/>
    <property type="evidence" value="ECO:0007669"/>
    <property type="project" value="TreeGrafter"/>
</dbReference>
<dbReference type="GO" id="GO:0042151">
    <property type="term" value="C:nematocyst"/>
    <property type="evidence" value="ECO:0007669"/>
    <property type="project" value="UniProtKB-SubCell"/>
</dbReference>
<dbReference type="GO" id="GO:0015459">
    <property type="term" value="F:potassium channel regulator activity"/>
    <property type="evidence" value="ECO:0007669"/>
    <property type="project" value="UniProtKB-KW"/>
</dbReference>
<dbReference type="GO" id="GO:0004867">
    <property type="term" value="F:serine-type endopeptidase inhibitor activity"/>
    <property type="evidence" value="ECO:0007669"/>
    <property type="project" value="UniProtKB-KW"/>
</dbReference>
<dbReference type="GO" id="GO:0090729">
    <property type="term" value="F:toxin activity"/>
    <property type="evidence" value="ECO:0007669"/>
    <property type="project" value="UniProtKB-KW"/>
</dbReference>
<dbReference type="CDD" id="cd22633">
    <property type="entry name" value="Kunitz_actitoxin-like"/>
    <property type="match status" value="1"/>
</dbReference>
<dbReference type="FunFam" id="4.10.410.10:FF:000021">
    <property type="entry name" value="Serine protease inhibitor, putative"/>
    <property type="match status" value="1"/>
</dbReference>
<dbReference type="Gene3D" id="4.10.410.10">
    <property type="entry name" value="Pancreatic trypsin inhibitor Kunitz domain"/>
    <property type="match status" value="1"/>
</dbReference>
<dbReference type="InterPro" id="IPR002223">
    <property type="entry name" value="Kunitz_BPTI"/>
</dbReference>
<dbReference type="InterPro" id="IPR036880">
    <property type="entry name" value="Kunitz_BPTI_sf"/>
</dbReference>
<dbReference type="InterPro" id="IPR020901">
    <property type="entry name" value="Prtase_inh_Kunz-CS"/>
</dbReference>
<dbReference type="InterPro" id="IPR050098">
    <property type="entry name" value="TFPI/VKTCI-like"/>
</dbReference>
<dbReference type="PANTHER" id="PTHR10083:SF374">
    <property type="entry name" value="BPTI_KUNITZ INHIBITOR DOMAIN-CONTAINING PROTEIN"/>
    <property type="match status" value="1"/>
</dbReference>
<dbReference type="PANTHER" id="PTHR10083">
    <property type="entry name" value="KUNITZ-TYPE PROTEASE INHIBITOR-RELATED"/>
    <property type="match status" value="1"/>
</dbReference>
<dbReference type="Pfam" id="PF00014">
    <property type="entry name" value="Kunitz_BPTI"/>
    <property type="match status" value="1"/>
</dbReference>
<dbReference type="PRINTS" id="PR00759">
    <property type="entry name" value="BASICPTASE"/>
</dbReference>
<dbReference type="SMART" id="SM00131">
    <property type="entry name" value="KU"/>
    <property type="match status" value="1"/>
</dbReference>
<dbReference type="SUPFAM" id="SSF57362">
    <property type="entry name" value="BPTI-like"/>
    <property type="match status" value="1"/>
</dbReference>
<dbReference type="PROSITE" id="PS00280">
    <property type="entry name" value="BPTI_KUNITZ_1"/>
    <property type="match status" value="1"/>
</dbReference>
<dbReference type="PROSITE" id="PS50279">
    <property type="entry name" value="BPTI_KUNITZ_2"/>
    <property type="match status" value="1"/>
</dbReference>
<keyword id="KW-1015">Disulfide bond</keyword>
<keyword id="KW-0872">Ion channel impairing toxin</keyword>
<keyword id="KW-0166">Nematocyst</keyword>
<keyword id="KW-0632">Potassium channel impairing toxin</keyword>
<keyword id="KW-0646">Protease inhibitor</keyword>
<keyword id="KW-0964">Secreted</keyword>
<keyword id="KW-0722">Serine protease inhibitor</keyword>
<keyword id="KW-0732">Signal</keyword>
<keyword id="KW-0800">Toxin</keyword>
<keyword id="KW-1220">Voltage-gated potassium channel impairing toxin</keyword>
<name>VKTF_ANEVI</name>